<dbReference type="EC" id="2.4.2.18" evidence="1"/>
<dbReference type="EMBL" id="CP000352">
    <property type="protein sequence ID" value="ABF10052.1"/>
    <property type="status" value="ALT_INIT"/>
    <property type="molecule type" value="Genomic_DNA"/>
</dbReference>
<dbReference type="RefSeq" id="WP_035822072.1">
    <property type="nucleotide sequence ID" value="NC_007973.1"/>
</dbReference>
<dbReference type="SMR" id="Q1LIH4"/>
<dbReference type="STRING" id="266264.Rmet_3180"/>
<dbReference type="KEGG" id="rme:Rmet_3180"/>
<dbReference type="eggNOG" id="COG0547">
    <property type="taxonomic scope" value="Bacteria"/>
</dbReference>
<dbReference type="HOGENOM" id="CLU_034315_2_1_4"/>
<dbReference type="UniPathway" id="UPA00035">
    <property type="reaction ID" value="UER00041"/>
</dbReference>
<dbReference type="Proteomes" id="UP000002429">
    <property type="component" value="Chromosome"/>
</dbReference>
<dbReference type="GO" id="GO:0005829">
    <property type="term" value="C:cytosol"/>
    <property type="evidence" value="ECO:0007669"/>
    <property type="project" value="TreeGrafter"/>
</dbReference>
<dbReference type="GO" id="GO:0004048">
    <property type="term" value="F:anthranilate phosphoribosyltransferase activity"/>
    <property type="evidence" value="ECO:0007669"/>
    <property type="project" value="UniProtKB-UniRule"/>
</dbReference>
<dbReference type="GO" id="GO:0000287">
    <property type="term" value="F:magnesium ion binding"/>
    <property type="evidence" value="ECO:0007669"/>
    <property type="project" value="UniProtKB-UniRule"/>
</dbReference>
<dbReference type="GO" id="GO:0000162">
    <property type="term" value="P:L-tryptophan biosynthetic process"/>
    <property type="evidence" value="ECO:0007669"/>
    <property type="project" value="UniProtKB-UniRule"/>
</dbReference>
<dbReference type="FunFam" id="1.20.970.10:FF:000006">
    <property type="entry name" value="Anthranilate phosphoribosyltransferase"/>
    <property type="match status" value="1"/>
</dbReference>
<dbReference type="FunFam" id="3.40.1030.10:FF:000002">
    <property type="entry name" value="Anthranilate phosphoribosyltransferase"/>
    <property type="match status" value="1"/>
</dbReference>
<dbReference type="Gene3D" id="3.40.1030.10">
    <property type="entry name" value="Nucleoside phosphorylase/phosphoribosyltransferase catalytic domain"/>
    <property type="match status" value="1"/>
</dbReference>
<dbReference type="Gene3D" id="1.20.970.10">
    <property type="entry name" value="Transferase, Pyrimidine Nucleoside Phosphorylase, Chain C"/>
    <property type="match status" value="1"/>
</dbReference>
<dbReference type="HAMAP" id="MF_00211">
    <property type="entry name" value="TrpD"/>
    <property type="match status" value="1"/>
</dbReference>
<dbReference type="InterPro" id="IPR005940">
    <property type="entry name" value="Anthranilate_Pribosyl_Tfrase"/>
</dbReference>
<dbReference type="InterPro" id="IPR000312">
    <property type="entry name" value="Glycosyl_Trfase_fam3"/>
</dbReference>
<dbReference type="InterPro" id="IPR017459">
    <property type="entry name" value="Glycosyl_Trfase_fam3_N_dom"/>
</dbReference>
<dbReference type="InterPro" id="IPR036320">
    <property type="entry name" value="Glycosyl_Trfase_fam3_N_dom_sf"/>
</dbReference>
<dbReference type="InterPro" id="IPR035902">
    <property type="entry name" value="Nuc_phospho_transferase"/>
</dbReference>
<dbReference type="NCBIfam" id="TIGR01245">
    <property type="entry name" value="trpD"/>
    <property type="match status" value="1"/>
</dbReference>
<dbReference type="PANTHER" id="PTHR43285">
    <property type="entry name" value="ANTHRANILATE PHOSPHORIBOSYLTRANSFERASE"/>
    <property type="match status" value="1"/>
</dbReference>
<dbReference type="PANTHER" id="PTHR43285:SF2">
    <property type="entry name" value="ANTHRANILATE PHOSPHORIBOSYLTRANSFERASE"/>
    <property type="match status" value="1"/>
</dbReference>
<dbReference type="Pfam" id="PF02885">
    <property type="entry name" value="Glycos_trans_3N"/>
    <property type="match status" value="1"/>
</dbReference>
<dbReference type="Pfam" id="PF00591">
    <property type="entry name" value="Glycos_transf_3"/>
    <property type="match status" value="1"/>
</dbReference>
<dbReference type="SUPFAM" id="SSF52418">
    <property type="entry name" value="Nucleoside phosphorylase/phosphoribosyltransferase catalytic domain"/>
    <property type="match status" value="1"/>
</dbReference>
<dbReference type="SUPFAM" id="SSF47648">
    <property type="entry name" value="Nucleoside phosphorylase/phosphoribosyltransferase N-terminal domain"/>
    <property type="match status" value="1"/>
</dbReference>
<comment type="function">
    <text evidence="1">Catalyzes the transfer of the phosphoribosyl group of 5-phosphorylribose-1-pyrophosphate (PRPP) to anthranilate to yield N-(5'-phosphoribosyl)-anthranilate (PRA).</text>
</comment>
<comment type="catalytic activity">
    <reaction evidence="1">
        <text>N-(5-phospho-beta-D-ribosyl)anthranilate + diphosphate = 5-phospho-alpha-D-ribose 1-diphosphate + anthranilate</text>
        <dbReference type="Rhea" id="RHEA:11768"/>
        <dbReference type="ChEBI" id="CHEBI:16567"/>
        <dbReference type="ChEBI" id="CHEBI:18277"/>
        <dbReference type="ChEBI" id="CHEBI:33019"/>
        <dbReference type="ChEBI" id="CHEBI:58017"/>
        <dbReference type="EC" id="2.4.2.18"/>
    </reaction>
</comment>
<comment type="cofactor">
    <cofactor evidence="1">
        <name>Mg(2+)</name>
        <dbReference type="ChEBI" id="CHEBI:18420"/>
    </cofactor>
    <text evidence="1">Binds 2 magnesium ions per monomer.</text>
</comment>
<comment type="pathway">
    <text evidence="1">Amino-acid biosynthesis; L-tryptophan biosynthesis; L-tryptophan from chorismate: step 2/5.</text>
</comment>
<comment type="subunit">
    <text evidence="1">Homodimer.</text>
</comment>
<comment type="similarity">
    <text evidence="1">Belongs to the anthranilate phosphoribosyltransferase family.</text>
</comment>
<comment type="sequence caution" evidence="2">
    <conflict type="erroneous initiation">
        <sequence resource="EMBL-CDS" id="ABF10052"/>
    </conflict>
    <text>Extended N-terminus.</text>
</comment>
<accession>Q1LIH4</accession>
<reference key="1">
    <citation type="journal article" date="2010" name="PLoS ONE">
        <title>The complete genome sequence of Cupriavidus metallidurans strain CH34, a master survivalist in harsh and anthropogenic environments.</title>
        <authorList>
            <person name="Janssen P.J."/>
            <person name="Van Houdt R."/>
            <person name="Moors H."/>
            <person name="Monsieurs P."/>
            <person name="Morin N."/>
            <person name="Michaux A."/>
            <person name="Benotmane M.A."/>
            <person name="Leys N."/>
            <person name="Vallaeys T."/>
            <person name="Lapidus A."/>
            <person name="Monchy S."/>
            <person name="Medigue C."/>
            <person name="Taghavi S."/>
            <person name="McCorkle S."/>
            <person name="Dunn J."/>
            <person name="van der Lelie D."/>
            <person name="Mergeay M."/>
        </authorList>
    </citation>
    <scope>NUCLEOTIDE SEQUENCE [LARGE SCALE GENOMIC DNA]</scope>
    <source>
        <strain>ATCC 43123 / DSM 2839 / NBRC 102507 / CH34</strain>
    </source>
</reference>
<gene>
    <name evidence="1" type="primary">trpD</name>
    <name type="ordered locus">Rmet_3180</name>
</gene>
<name>TRPD_CUPMC</name>
<proteinExistence type="inferred from homology"/>
<feature type="chain" id="PRO_0000325453" description="Anthranilate phosphoribosyltransferase">
    <location>
        <begin position="1"/>
        <end position="342"/>
    </location>
</feature>
<feature type="binding site" evidence="1">
    <location>
        <position position="84"/>
    </location>
    <ligand>
        <name>5-phospho-alpha-D-ribose 1-diphosphate</name>
        <dbReference type="ChEBI" id="CHEBI:58017"/>
    </ligand>
</feature>
<feature type="binding site" evidence="1">
    <location>
        <position position="84"/>
    </location>
    <ligand>
        <name>anthranilate</name>
        <dbReference type="ChEBI" id="CHEBI:16567"/>
        <label>1</label>
    </ligand>
</feature>
<feature type="binding site" evidence="1">
    <location>
        <begin position="87"/>
        <end position="88"/>
    </location>
    <ligand>
        <name>5-phospho-alpha-D-ribose 1-diphosphate</name>
        <dbReference type="ChEBI" id="CHEBI:58017"/>
    </ligand>
</feature>
<feature type="binding site" evidence="1">
    <location>
        <position position="92"/>
    </location>
    <ligand>
        <name>5-phospho-alpha-D-ribose 1-diphosphate</name>
        <dbReference type="ChEBI" id="CHEBI:58017"/>
    </ligand>
</feature>
<feature type="binding site" evidence="1">
    <location>
        <begin position="94"/>
        <end position="97"/>
    </location>
    <ligand>
        <name>5-phospho-alpha-D-ribose 1-diphosphate</name>
        <dbReference type="ChEBI" id="CHEBI:58017"/>
    </ligand>
</feature>
<feature type="binding site" evidence="1">
    <location>
        <position position="96"/>
    </location>
    <ligand>
        <name>Mg(2+)</name>
        <dbReference type="ChEBI" id="CHEBI:18420"/>
        <label>1</label>
    </ligand>
</feature>
<feature type="binding site" evidence="1">
    <location>
        <begin position="112"/>
        <end position="120"/>
    </location>
    <ligand>
        <name>5-phospho-alpha-D-ribose 1-diphosphate</name>
        <dbReference type="ChEBI" id="CHEBI:58017"/>
    </ligand>
</feature>
<feature type="binding site" evidence="1">
    <location>
        <position position="115"/>
    </location>
    <ligand>
        <name>anthranilate</name>
        <dbReference type="ChEBI" id="CHEBI:16567"/>
        <label>1</label>
    </ligand>
</feature>
<feature type="binding site" evidence="1">
    <location>
        <position position="124"/>
    </location>
    <ligand>
        <name>5-phospho-alpha-D-ribose 1-diphosphate</name>
        <dbReference type="ChEBI" id="CHEBI:58017"/>
    </ligand>
</feature>
<feature type="binding site" evidence="1">
    <location>
        <position position="170"/>
    </location>
    <ligand>
        <name>anthranilate</name>
        <dbReference type="ChEBI" id="CHEBI:16567"/>
        <label>2</label>
    </ligand>
</feature>
<feature type="binding site" evidence="1">
    <location>
        <position position="229"/>
    </location>
    <ligand>
        <name>Mg(2+)</name>
        <dbReference type="ChEBI" id="CHEBI:18420"/>
        <label>2</label>
    </ligand>
</feature>
<feature type="binding site" evidence="1">
    <location>
        <position position="230"/>
    </location>
    <ligand>
        <name>Mg(2+)</name>
        <dbReference type="ChEBI" id="CHEBI:18420"/>
        <label>1</label>
    </ligand>
</feature>
<feature type="binding site" evidence="1">
    <location>
        <position position="230"/>
    </location>
    <ligand>
        <name>Mg(2+)</name>
        <dbReference type="ChEBI" id="CHEBI:18420"/>
        <label>2</label>
    </ligand>
</feature>
<keyword id="KW-0028">Amino-acid biosynthesis</keyword>
<keyword id="KW-0057">Aromatic amino acid biosynthesis</keyword>
<keyword id="KW-0328">Glycosyltransferase</keyword>
<keyword id="KW-0460">Magnesium</keyword>
<keyword id="KW-0479">Metal-binding</keyword>
<keyword id="KW-1185">Reference proteome</keyword>
<keyword id="KW-0808">Transferase</keyword>
<keyword id="KW-0822">Tryptophan biosynthesis</keyword>
<sequence>MSITPQEALTRCIEHREIFHDEMLHLMRQIMQGQISPVMAAAILTGLRVKKETIGEISAAAQVMREFANHVTVKDRENFVDIVGTGGDGSHTFNISTASMFVAAAAGAKIAKHGNRGVSSKSGSADVLEALGVNIMLTPEQVGECIEQTGIGFMFAPTHHPAMKNVAPIRKEMGVRTIFNILGPLTNPADAPNILMGVFHPDLVGIQVRVMQRLGAQHAIVVYGKDGMDEVSLGAATLVGELKDGEVREYEIHPEDFGLSMISNRGLKVADAVESKEMLLEALSDVPGTPREIVSLNAGTALYAANVASSIEDGIRRAREAIASGAAREKLDQFVRATQQFK</sequence>
<organism>
    <name type="scientific">Cupriavidus metallidurans (strain ATCC 43123 / DSM 2839 / NBRC 102507 / CH34)</name>
    <name type="common">Ralstonia metallidurans</name>
    <dbReference type="NCBI Taxonomy" id="266264"/>
    <lineage>
        <taxon>Bacteria</taxon>
        <taxon>Pseudomonadati</taxon>
        <taxon>Pseudomonadota</taxon>
        <taxon>Betaproteobacteria</taxon>
        <taxon>Burkholderiales</taxon>
        <taxon>Burkholderiaceae</taxon>
        <taxon>Cupriavidus</taxon>
    </lineage>
</organism>
<protein>
    <recommendedName>
        <fullName evidence="1">Anthranilate phosphoribosyltransferase</fullName>
        <ecNumber evidence="1">2.4.2.18</ecNumber>
    </recommendedName>
</protein>
<evidence type="ECO:0000255" key="1">
    <source>
        <dbReference type="HAMAP-Rule" id="MF_00211"/>
    </source>
</evidence>
<evidence type="ECO:0000305" key="2"/>